<protein>
    <recommendedName>
        <fullName>Cytochrome c oxidase subunit 3</fullName>
        <ecNumber>7.1.1.9</ecNumber>
    </recommendedName>
    <alternativeName>
        <fullName>Cytochrome c oxidase polypeptide III</fullName>
    </alternativeName>
</protein>
<gene>
    <name type="primary">MT-CO3</name>
    <name type="synonym">COIII</name>
    <name type="synonym">COXIII</name>
    <name type="synonym">MTCO3</name>
</gene>
<keyword id="KW-0472">Membrane</keyword>
<keyword id="KW-0496">Mitochondrion</keyword>
<keyword id="KW-0999">Mitochondrion inner membrane</keyword>
<keyword id="KW-1185">Reference proteome</keyword>
<keyword id="KW-1278">Translocase</keyword>
<keyword id="KW-0812">Transmembrane</keyword>
<keyword id="KW-1133">Transmembrane helix</keyword>
<proteinExistence type="inferred from homology"/>
<sequence length="261" mass="29761">MTHQTHAYHMVNPSPWPLTGALSALLMTSGLAMWFHFNSTLLLALGLLTNILTMYQWWRDIIRESTFQGHHTSIVQKGLRYGMILFIISEVFFFSGFFWAFYHSSLAPTPELGGCWPPTGIHPLNPLEVPLLNTSVLLASGVSITWAHHSLMEGNRKNMLQGLFITISLGVYFTLLQASEYYEASFTISDGVYGSTFFVATGFHGLHVIIGSTFLIVCFLRQLKFHFTSSHHFGFEAAAWYWHFVDVVWLFLYVSIYWWGS</sequence>
<feature type="chain" id="PRO_0000183772" description="Cytochrome c oxidase subunit 3">
    <location>
        <begin position="1"/>
        <end position="261"/>
    </location>
</feature>
<feature type="topological domain" description="Mitochondrial matrix" evidence="1">
    <location>
        <begin position="1"/>
        <end position="15"/>
    </location>
</feature>
<feature type="transmembrane region" description="Helical; Name=I" evidence="1">
    <location>
        <begin position="16"/>
        <end position="34"/>
    </location>
</feature>
<feature type="topological domain" description="Mitochondrial intermembrane" evidence="1">
    <location>
        <begin position="35"/>
        <end position="40"/>
    </location>
</feature>
<feature type="transmembrane region" description="Helical; Name=II" evidence="1">
    <location>
        <begin position="41"/>
        <end position="66"/>
    </location>
</feature>
<feature type="topological domain" description="Mitochondrial matrix" evidence="1">
    <location>
        <begin position="67"/>
        <end position="72"/>
    </location>
</feature>
<feature type="transmembrane region" description="Helical; Name=III" evidence="1">
    <location>
        <begin position="73"/>
        <end position="105"/>
    </location>
</feature>
<feature type="topological domain" description="Mitochondrial intermembrane" evidence="1">
    <location>
        <begin position="106"/>
        <end position="128"/>
    </location>
</feature>
<feature type="transmembrane region" description="Helical; Name=IV" evidence="1">
    <location>
        <begin position="129"/>
        <end position="152"/>
    </location>
</feature>
<feature type="topological domain" description="Mitochondrial matrix" evidence="1">
    <location>
        <begin position="153"/>
        <end position="155"/>
    </location>
</feature>
<feature type="transmembrane region" description="Helical; Name=V" evidence="1">
    <location>
        <begin position="156"/>
        <end position="183"/>
    </location>
</feature>
<feature type="topological domain" description="Mitochondrial intermembrane" evidence="1">
    <location>
        <begin position="184"/>
        <end position="190"/>
    </location>
</feature>
<feature type="transmembrane region" description="Helical; Name=VI" evidence="1">
    <location>
        <begin position="191"/>
        <end position="223"/>
    </location>
</feature>
<feature type="topological domain" description="Mitochondrial matrix" evidence="1">
    <location>
        <begin position="224"/>
        <end position="232"/>
    </location>
</feature>
<feature type="transmembrane region" description="Helical; Name=VII" evidence="1">
    <location>
        <begin position="233"/>
        <end position="256"/>
    </location>
</feature>
<feature type="topological domain" description="Mitochondrial intermembrane" evidence="1">
    <location>
        <begin position="257"/>
        <end position="261"/>
    </location>
</feature>
<dbReference type="EC" id="7.1.1.9"/>
<dbReference type="EMBL" id="X97337">
    <property type="protein sequence ID" value="CAA66020.1"/>
    <property type="molecule type" value="Genomic_DNA"/>
</dbReference>
<dbReference type="PIR" id="T11369">
    <property type="entry name" value="T11369"/>
</dbReference>
<dbReference type="SMR" id="P92481"/>
<dbReference type="KEGG" id="eai:808054"/>
<dbReference type="CTD" id="4514"/>
<dbReference type="Proteomes" id="UP000694387">
    <property type="component" value="Mitochondrion MT"/>
</dbReference>
<dbReference type="GO" id="GO:0005743">
    <property type="term" value="C:mitochondrial inner membrane"/>
    <property type="evidence" value="ECO:0007669"/>
    <property type="project" value="UniProtKB-SubCell"/>
</dbReference>
<dbReference type="GO" id="GO:0045277">
    <property type="term" value="C:respiratory chain complex IV"/>
    <property type="evidence" value="ECO:0000250"/>
    <property type="project" value="UniProtKB"/>
</dbReference>
<dbReference type="GO" id="GO:0004129">
    <property type="term" value="F:cytochrome-c oxidase activity"/>
    <property type="evidence" value="ECO:0007669"/>
    <property type="project" value="UniProtKB-EC"/>
</dbReference>
<dbReference type="GO" id="GO:0006123">
    <property type="term" value="P:mitochondrial electron transport, cytochrome c to oxygen"/>
    <property type="evidence" value="ECO:0007669"/>
    <property type="project" value="TreeGrafter"/>
</dbReference>
<dbReference type="GO" id="GO:0008535">
    <property type="term" value="P:respiratory chain complex IV assembly"/>
    <property type="evidence" value="ECO:0000250"/>
    <property type="project" value="UniProtKB"/>
</dbReference>
<dbReference type="CDD" id="cd01665">
    <property type="entry name" value="Cyt_c_Oxidase_III"/>
    <property type="match status" value="1"/>
</dbReference>
<dbReference type="FunFam" id="1.10.287.70:FF:000048">
    <property type="entry name" value="Cytochrome c oxidase subunit 3"/>
    <property type="match status" value="1"/>
</dbReference>
<dbReference type="FunFam" id="1.20.120.80:FF:000002">
    <property type="entry name" value="Cytochrome c oxidase subunit 3"/>
    <property type="match status" value="1"/>
</dbReference>
<dbReference type="Gene3D" id="1.10.287.70">
    <property type="match status" value="1"/>
</dbReference>
<dbReference type="Gene3D" id="1.20.120.80">
    <property type="entry name" value="Cytochrome c oxidase, subunit III, four-helix bundle"/>
    <property type="match status" value="1"/>
</dbReference>
<dbReference type="InterPro" id="IPR024791">
    <property type="entry name" value="Cyt_c/ubiquinol_Oxase_su3"/>
</dbReference>
<dbReference type="InterPro" id="IPR033945">
    <property type="entry name" value="Cyt_c_oxase_su3_dom"/>
</dbReference>
<dbReference type="InterPro" id="IPR000298">
    <property type="entry name" value="Cyt_c_oxidase-like_su3"/>
</dbReference>
<dbReference type="InterPro" id="IPR035973">
    <property type="entry name" value="Cyt_c_oxidase_su3-like_sf"/>
</dbReference>
<dbReference type="InterPro" id="IPR013833">
    <property type="entry name" value="Cyt_c_oxidase_su3_a-hlx"/>
</dbReference>
<dbReference type="PANTHER" id="PTHR11403:SF7">
    <property type="entry name" value="CYTOCHROME C OXIDASE SUBUNIT 3"/>
    <property type="match status" value="1"/>
</dbReference>
<dbReference type="PANTHER" id="PTHR11403">
    <property type="entry name" value="CYTOCHROME C OXIDASE SUBUNIT III"/>
    <property type="match status" value="1"/>
</dbReference>
<dbReference type="Pfam" id="PF00510">
    <property type="entry name" value="COX3"/>
    <property type="match status" value="1"/>
</dbReference>
<dbReference type="SUPFAM" id="SSF81452">
    <property type="entry name" value="Cytochrome c oxidase subunit III-like"/>
    <property type="match status" value="1"/>
</dbReference>
<dbReference type="PROSITE" id="PS50253">
    <property type="entry name" value="COX3"/>
    <property type="match status" value="1"/>
</dbReference>
<evidence type="ECO:0000250" key="1">
    <source>
        <dbReference type="UniProtKB" id="P00415"/>
    </source>
</evidence>
<evidence type="ECO:0000250" key="2">
    <source>
        <dbReference type="UniProtKB" id="P00420"/>
    </source>
</evidence>
<evidence type="ECO:0000305" key="3"/>
<organism>
    <name type="scientific">Equus asinus</name>
    <name type="common">Donkey</name>
    <name type="synonym">Equus africanus asinus</name>
    <dbReference type="NCBI Taxonomy" id="9793"/>
    <lineage>
        <taxon>Eukaryota</taxon>
        <taxon>Metazoa</taxon>
        <taxon>Chordata</taxon>
        <taxon>Craniata</taxon>
        <taxon>Vertebrata</taxon>
        <taxon>Euteleostomi</taxon>
        <taxon>Mammalia</taxon>
        <taxon>Eutheria</taxon>
        <taxon>Laurasiatheria</taxon>
        <taxon>Perissodactyla</taxon>
        <taxon>Equidae</taxon>
        <taxon>Equus</taxon>
    </lineage>
</organism>
<comment type="function">
    <text evidence="2">Component of the cytochrome c oxidase, the last enzyme in the mitochondrial electron transport chain which drives oxidative phosphorylation. The respiratory chain contains 3 multisubunit complexes succinate dehydrogenase (complex II, CII), ubiquinol-cytochrome c oxidoreductase (cytochrome b-c1 complex, complex III, CIII) and cytochrome c oxidase (complex IV, CIV), that cooperate to transfer electrons derived from NADH and succinate to molecular oxygen, creating an electrochemical gradient over the inner membrane that drives transmembrane transport and the ATP synthase. Cytochrome c oxidase is the component of the respiratory chain that catalyzes the reduction of oxygen to water. Electrons originating from reduced cytochrome c in the intermembrane space (IMS) are transferred via the dinuclear copper A center (CU(A)) of subunit 2 and heme A of subunit 1 to the active site in subunit 1, a binuclear center (BNC) formed by heme A3 and copper B (CU(B)). The BNC reduces molecular oxygen to 2 water molecules using 4 electrons from cytochrome c in the IMS and 4 protons from the mitochondrial matrix.</text>
</comment>
<comment type="catalytic activity">
    <reaction evidence="2">
        <text>4 Fe(II)-[cytochrome c] + O2 + 8 H(+)(in) = 4 Fe(III)-[cytochrome c] + 2 H2O + 4 H(+)(out)</text>
        <dbReference type="Rhea" id="RHEA:11436"/>
        <dbReference type="Rhea" id="RHEA-COMP:10350"/>
        <dbReference type="Rhea" id="RHEA-COMP:14399"/>
        <dbReference type="ChEBI" id="CHEBI:15377"/>
        <dbReference type="ChEBI" id="CHEBI:15378"/>
        <dbReference type="ChEBI" id="CHEBI:15379"/>
        <dbReference type="ChEBI" id="CHEBI:29033"/>
        <dbReference type="ChEBI" id="CHEBI:29034"/>
        <dbReference type="EC" id="7.1.1.9"/>
    </reaction>
    <physiologicalReaction direction="left-to-right" evidence="2">
        <dbReference type="Rhea" id="RHEA:11437"/>
    </physiologicalReaction>
</comment>
<comment type="subunit">
    <text evidence="1">Component of the cytochrome c oxidase (complex IV, CIV), a multisubunit enzyme composed of 14 subunits. The complex is composed of a catalytic core of 3 subunits MT-CO1, MT-CO2 and MT-CO3, encoded in the mitochondrial DNA, and 11 supernumerary subunits COX4I, COX5A, COX5B, COX6A, COX6B, COX6C, COX7A, COX7B, COX7C, COX8 and NDUFA4, which are encoded in the nuclear genome. The complex exists as a monomer or a dimer and forms supercomplexes (SCs) in the inner mitochondrial membrane with NADH-ubiquinone oxidoreductase (complex I, CI) and ubiquinol-cytochrome c oxidoreductase (cytochrome b-c1 complex, complex III, CIII), resulting in different assemblies (supercomplex SCI(1)III(2)IV(1) and megacomplex MCI(2)III(2)IV(2)).</text>
</comment>
<comment type="subcellular location">
    <subcellularLocation>
        <location evidence="1">Mitochondrion inner membrane</location>
        <topology evidence="1">Multi-pass membrane protein</topology>
    </subcellularLocation>
</comment>
<comment type="similarity">
    <text evidence="3">Belongs to the cytochrome c oxidase subunit 3 family.</text>
</comment>
<geneLocation type="mitochondrion"/>
<name>COX3_EQUAS</name>
<reference key="1">
    <citation type="journal article" date="1996" name="J. Mol. Evol.">
        <title>The complete mitochondrial DNA (mtDNA) of the donkey and mtDNA comparisons among four closely related mammalian species-pairs.</title>
        <authorList>
            <person name="Xu X."/>
            <person name="Gullberg A."/>
            <person name="Arnason U."/>
        </authorList>
    </citation>
    <scope>NUCLEOTIDE SEQUENCE [GENOMIC DNA]</scope>
    <source>
        <tissue>Kidney</tissue>
    </source>
</reference>
<accession>P92481</accession>